<feature type="chain" id="PRO_0000094739" description="Threonine efflux protein">
    <location>
        <begin position="1"/>
        <end position="206"/>
    </location>
</feature>
<feature type="transmembrane region" description="Helical" evidence="2">
    <location>
        <begin position="1"/>
        <end position="21"/>
    </location>
</feature>
<feature type="topological domain" description="Periplasmic" evidence="2">
    <location>
        <begin position="22"/>
        <end position="43"/>
    </location>
</feature>
<feature type="transmembrane region" description="Helical" evidence="2">
    <location>
        <begin position="44"/>
        <end position="64"/>
    </location>
</feature>
<feature type="topological domain" description="Cytoplasmic" evidence="2">
    <location>
        <begin position="65"/>
        <end position="66"/>
    </location>
</feature>
<feature type="transmembrane region" description="Helical" evidence="2">
    <location>
        <begin position="67"/>
        <end position="87"/>
    </location>
</feature>
<feature type="topological domain" description="Periplasmic" evidence="2">
    <location>
        <begin position="88"/>
        <end position="149"/>
    </location>
</feature>
<feature type="transmembrane region" description="Helical" evidence="2">
    <location>
        <begin position="150"/>
        <end position="173"/>
    </location>
</feature>
<feature type="topological domain" description="Cytoplasmic" evidence="2">
    <location>
        <begin position="174"/>
        <end position="206"/>
    </location>
</feature>
<keyword id="KW-0997">Cell inner membrane</keyword>
<keyword id="KW-1003">Cell membrane</keyword>
<keyword id="KW-0472">Membrane</keyword>
<keyword id="KW-1185">Reference proteome</keyword>
<keyword id="KW-0812">Transmembrane</keyword>
<keyword id="KW-1133">Transmembrane helix</keyword>
<keyword id="KW-0813">Transport</keyword>
<accession>Q9L6N7</accession>
<sequence length="206" mass="22498">MMMLFFTVAMVHIVALMSPGPDFFFVSQTAVSRSRKEAMMGVLGITCGVMVWAGVALLGLHLIIEKMAWLHTIIMVGGGLYLCWMGYQMLRGALKKQDAAASSPHIELAQSGRSFLKGLLTNLSNPKAIIYFGSVFSLFVGDNVGAAARWGIFALITLETLAWFTVVASLFALPKMRRGYQRLAKWIDGFAGALFAGFGIHLIISR</sequence>
<gene>
    <name type="primary">rhtC</name>
    <name type="ordered locus">STM3959</name>
    <name type="ORF">STMD1.31</name>
</gene>
<name>RHTC_SALTY</name>
<comment type="function">
    <text evidence="1">Conducts the efflux of threonine.</text>
</comment>
<comment type="subcellular location">
    <subcellularLocation>
        <location evidence="1">Cell inner membrane</location>
        <topology evidence="1">Multi-pass membrane protein</topology>
    </subcellularLocation>
</comment>
<comment type="similarity">
    <text evidence="3">Belongs to the Rht family.</text>
</comment>
<protein>
    <recommendedName>
        <fullName>Threonine efflux protein</fullName>
    </recommendedName>
</protein>
<dbReference type="EMBL" id="AF233324">
    <property type="protein sequence ID" value="AAF33433.1"/>
    <property type="molecule type" value="Genomic_DNA"/>
</dbReference>
<dbReference type="EMBL" id="AE006468">
    <property type="protein sequence ID" value="AAL22803.1"/>
    <property type="molecule type" value="Genomic_DNA"/>
</dbReference>
<dbReference type="RefSeq" id="NP_462844.1">
    <property type="nucleotide sequence ID" value="NC_003197.2"/>
</dbReference>
<dbReference type="RefSeq" id="WP_000980080.1">
    <property type="nucleotide sequence ID" value="NC_003197.2"/>
</dbReference>
<dbReference type="STRING" id="99287.STM3959"/>
<dbReference type="PaxDb" id="99287-STM3959"/>
<dbReference type="GeneID" id="1255485"/>
<dbReference type="KEGG" id="stm:STM3959"/>
<dbReference type="PATRIC" id="fig|99287.12.peg.4177"/>
<dbReference type="HOGENOM" id="CLU_079569_0_1_6"/>
<dbReference type="OMA" id="MAWLHNI"/>
<dbReference type="PhylomeDB" id="Q9L6N7"/>
<dbReference type="BioCyc" id="SENT99287:STM3959-MONOMER"/>
<dbReference type="Proteomes" id="UP000001014">
    <property type="component" value="Chromosome"/>
</dbReference>
<dbReference type="GO" id="GO:0005886">
    <property type="term" value="C:plasma membrane"/>
    <property type="evidence" value="ECO:0000318"/>
    <property type="project" value="GO_Central"/>
</dbReference>
<dbReference type="GO" id="GO:0015171">
    <property type="term" value="F:amino acid transmembrane transporter activity"/>
    <property type="evidence" value="ECO:0000318"/>
    <property type="project" value="GO_Central"/>
</dbReference>
<dbReference type="GO" id="GO:0006865">
    <property type="term" value="P:amino acid transport"/>
    <property type="evidence" value="ECO:0000318"/>
    <property type="project" value="GO_Central"/>
</dbReference>
<dbReference type="InterPro" id="IPR004778">
    <property type="entry name" value="Homoserine/Threonine_efflux"/>
</dbReference>
<dbReference type="InterPro" id="IPR001123">
    <property type="entry name" value="LeuE-type"/>
</dbReference>
<dbReference type="NCBIfam" id="TIGR00949">
    <property type="entry name" value="2A76"/>
    <property type="match status" value="1"/>
</dbReference>
<dbReference type="NCBIfam" id="NF007591">
    <property type="entry name" value="PRK10229.1"/>
    <property type="match status" value="1"/>
</dbReference>
<dbReference type="PANTHER" id="PTHR30086">
    <property type="entry name" value="ARGININE EXPORTER PROTEIN ARGO"/>
    <property type="match status" value="1"/>
</dbReference>
<dbReference type="PANTHER" id="PTHR30086:SF19">
    <property type="entry name" value="THREONINE EFFLUX PROTEIN"/>
    <property type="match status" value="1"/>
</dbReference>
<dbReference type="Pfam" id="PF01810">
    <property type="entry name" value="LysE"/>
    <property type="match status" value="1"/>
</dbReference>
<dbReference type="PIRSF" id="PIRSF006324">
    <property type="entry name" value="LeuE"/>
    <property type="match status" value="1"/>
</dbReference>
<proteinExistence type="inferred from homology"/>
<reference key="1">
    <citation type="journal article" date="2001" name="Nature">
        <title>Complete genome sequence of Salmonella enterica serovar Typhimurium LT2.</title>
        <authorList>
            <person name="McClelland M."/>
            <person name="Sanderson K.E."/>
            <person name="Spieth J."/>
            <person name="Clifton S.W."/>
            <person name="Latreille P."/>
            <person name="Courtney L."/>
            <person name="Porwollik S."/>
            <person name="Ali J."/>
            <person name="Dante M."/>
            <person name="Du F."/>
            <person name="Hou S."/>
            <person name="Layman D."/>
            <person name="Leonard S."/>
            <person name="Nguyen C."/>
            <person name="Scott K."/>
            <person name="Holmes A."/>
            <person name="Grewal N."/>
            <person name="Mulvaney E."/>
            <person name="Ryan E."/>
            <person name="Sun H."/>
            <person name="Florea L."/>
            <person name="Miller W."/>
            <person name="Stoneking T."/>
            <person name="Nhan M."/>
            <person name="Waterston R."/>
            <person name="Wilson R.K."/>
        </authorList>
    </citation>
    <scope>NUCLEOTIDE SEQUENCE [LARGE SCALE GENOMIC DNA]</scope>
    <source>
        <strain>LT2 / SGSC1412 / ATCC 700720</strain>
    </source>
</reference>
<evidence type="ECO:0000250" key="1"/>
<evidence type="ECO:0000255" key="2"/>
<evidence type="ECO:0000305" key="3"/>
<organism>
    <name type="scientific">Salmonella typhimurium (strain LT2 / SGSC1412 / ATCC 700720)</name>
    <dbReference type="NCBI Taxonomy" id="99287"/>
    <lineage>
        <taxon>Bacteria</taxon>
        <taxon>Pseudomonadati</taxon>
        <taxon>Pseudomonadota</taxon>
        <taxon>Gammaproteobacteria</taxon>
        <taxon>Enterobacterales</taxon>
        <taxon>Enterobacteriaceae</taxon>
        <taxon>Salmonella</taxon>
    </lineage>
</organism>